<protein>
    <recommendedName>
        <fullName>Dermonecrotic toxin LiSicTox-betaIA1ii</fullName>
        <ecNumber evidence="5">4.6.1.-</ecNumber>
    </recommendedName>
    <alternativeName>
        <fullName>Dermonecrotic toxin-like II</fullName>
    </alternativeName>
    <alternativeName>
        <fullName>Loxtox i7</fullName>
    </alternativeName>
    <alternativeName>
        <fullName>Phospholipase D</fullName>
        <shortName>PLD</shortName>
    </alternativeName>
    <alternativeName>
        <fullName>Sphingomyelin phosphodiesterase D 7</fullName>
        <shortName>SMD 7</shortName>
        <shortName>Smase D 7</shortName>
        <shortName>Sphingomyelinase D 7</shortName>
    </alternativeName>
</protein>
<accession>Q27Q54</accession>
<accession>B2KKW2</accession>
<comment type="function">
    <text evidence="2 4">Dermonecrotic toxins cleave the phosphodiester linkage between the phosphate and headgroup of certain phospholipids (sphingolipid and lysolipid substrates), forming an alcohol (often choline) and a cyclic phosphate (By similarity). This toxin acts on sphingomyelin (SM) with low activity (By similarity). It may also act on ceramide phosphoethanolamine (CPE), lysophosphatidylcholine (LPC) and lysophosphatidylethanolamine (LPE), but not on lysophosphatidylserine (LPS), and lysophosphatidylglycerol (LPG) (By similarity). It acts by transphosphatidylation, releasing exclusively cyclic phosphate products as second products (By similarity). Induces dermonecrosis, hemolysis, increased vascular permeability, edema, inflammatory response, and platelet aggregation (By similarity).</text>
</comment>
<comment type="catalytic activity">
    <reaction evidence="2">
        <text>an N-(acyl)-sphingosylphosphocholine = an N-(acyl)-sphingosyl-1,3-cyclic phosphate + choline</text>
        <dbReference type="Rhea" id="RHEA:60652"/>
        <dbReference type="ChEBI" id="CHEBI:15354"/>
        <dbReference type="ChEBI" id="CHEBI:64583"/>
        <dbReference type="ChEBI" id="CHEBI:143892"/>
    </reaction>
</comment>
<comment type="catalytic activity">
    <reaction evidence="2">
        <text>an N-(acyl)-sphingosylphosphoethanolamine = an N-(acyl)-sphingosyl-1,3-cyclic phosphate + ethanolamine</text>
        <dbReference type="Rhea" id="RHEA:60648"/>
        <dbReference type="ChEBI" id="CHEBI:57603"/>
        <dbReference type="ChEBI" id="CHEBI:143891"/>
        <dbReference type="ChEBI" id="CHEBI:143892"/>
    </reaction>
</comment>
<comment type="catalytic activity">
    <reaction evidence="2">
        <text>a 1-acyl-sn-glycero-3-phosphocholine = a 1-acyl-sn-glycero-2,3-cyclic phosphate + choline</text>
        <dbReference type="Rhea" id="RHEA:60700"/>
        <dbReference type="ChEBI" id="CHEBI:15354"/>
        <dbReference type="ChEBI" id="CHEBI:58168"/>
        <dbReference type="ChEBI" id="CHEBI:143947"/>
    </reaction>
</comment>
<comment type="catalytic activity">
    <reaction evidence="2">
        <text>a 1-acyl-sn-glycero-3-phosphoethanolamine = a 1-acyl-sn-glycero-2,3-cyclic phosphate + ethanolamine</text>
        <dbReference type="Rhea" id="RHEA:60704"/>
        <dbReference type="ChEBI" id="CHEBI:57603"/>
        <dbReference type="ChEBI" id="CHEBI:64381"/>
        <dbReference type="ChEBI" id="CHEBI:143947"/>
    </reaction>
</comment>
<comment type="cofactor">
    <cofactor evidence="6">
        <name>Mg(2+)</name>
        <dbReference type="ChEBI" id="CHEBI:18420"/>
    </cofactor>
    <text evidence="6">Binds 1 Mg(2+) ion per subunit.</text>
</comment>
<comment type="subcellular location">
    <subcellularLocation>
        <location evidence="10">Secreted</location>
    </subcellularLocation>
</comment>
<comment type="tissue specificity">
    <text evidence="10">Expressed by the venom gland.</text>
</comment>
<comment type="similarity">
    <text evidence="8">Belongs to the arthropod phospholipase D family. Class II subfamily.</text>
</comment>
<comment type="caution">
    <text evidence="2 3 5">The most common activity assay for dermonecrotic toxins detects enzymatic activity by monitoring choline release from substrate. Liberation of choline from sphingomyelin (SM) or lysophosphatidylcholine (LPC) is commonly assumed to result from substrate hydrolysis, giving either ceramide-1-phosphate (C1P) or lysophosphatidic acid (LPA), respectively, as a second product. However, two studies from Lajoie and colleagues (2013 and 2015) report the observation of exclusive formation of cyclic phosphate products as second products, resulting from intramolecular transphosphatidylation. Cyclic phosphates have vastly different biological properties from their monoester counterparts, and they may be relevant to the pathology of brown spider envenomation.</text>
</comment>
<feature type="signal peptide" evidence="7">
    <location>
        <begin position="1"/>
        <end position="21"/>
    </location>
</feature>
<feature type="propeptide" id="PRO_0000279571" evidence="1">
    <location>
        <begin position="22"/>
        <end position="26"/>
    </location>
</feature>
<feature type="chain" id="PRO_0000279572" description="Dermonecrotic toxin LiSicTox-betaIA1ii">
    <location>
        <begin position="27"/>
        <end position="304"/>
    </location>
</feature>
<feature type="active site" evidence="6">
    <location>
        <position position="38"/>
    </location>
</feature>
<feature type="active site" description="Nucleophile" evidence="6">
    <location>
        <position position="74"/>
    </location>
</feature>
<feature type="binding site" evidence="6">
    <location>
        <position position="58"/>
    </location>
    <ligand>
        <name>Mg(2+)</name>
        <dbReference type="ChEBI" id="CHEBI:18420"/>
    </ligand>
</feature>
<feature type="binding site" evidence="6">
    <location>
        <position position="60"/>
    </location>
    <ligand>
        <name>Mg(2+)</name>
        <dbReference type="ChEBI" id="CHEBI:18420"/>
    </ligand>
</feature>
<feature type="binding site" evidence="6">
    <location>
        <position position="118"/>
    </location>
    <ligand>
        <name>Mg(2+)</name>
        <dbReference type="ChEBI" id="CHEBI:18420"/>
    </ligand>
</feature>
<feature type="site" description="May prevent sphingomyelin recognition" evidence="9">
    <location>
        <position position="122"/>
    </location>
</feature>
<feature type="site" description="May prevent sphingomyelin recognition" evidence="9">
    <location>
        <position position="161"/>
    </location>
</feature>
<feature type="disulfide bond" evidence="4">
    <location>
        <begin position="78"/>
        <end position="84"/>
    </location>
</feature>
<feature type="disulfide bond" evidence="4">
    <location>
        <begin position="80"/>
        <end position="223"/>
    </location>
</feature>
<name>B1H2_LOXIN</name>
<sequence length="304" mass="34464">MLLCAVISFIVYAVFLQEANGHAAERADSRKPIWDIAHMVNDLELVDEYLGDGANGLELDVAFTDDGTADKMYHGVPCDCFRSCKRTEGFTKYMDYIRQLTTPGNSKFKSQLILLIMDLKLNGIEPNVAYAAGKSVAEKLLSGYWQNGKSGARAYIVLSLETITRPDFISGFRDAIKASGHEELFEKIGWDFSGNEDLGEIRRVYQKYGIEDHIWQGDGITNCLPRGDYRLTEAMKKKNDPNYKYTLKVYTWSIDKESSIRNALRLGVDAVMTNYPARVKSILRESEFSGTHRMATYDDNPWQK</sequence>
<dbReference type="EC" id="4.6.1.-" evidence="5"/>
<dbReference type="EMBL" id="DQ388597">
    <property type="protein sequence ID" value="ABD48089.1"/>
    <property type="molecule type" value="mRNA"/>
</dbReference>
<dbReference type="EMBL" id="EF535256">
    <property type="protein sequence ID" value="ABU43335.1"/>
    <property type="molecule type" value="mRNA"/>
</dbReference>
<dbReference type="SMR" id="Q27Q54"/>
<dbReference type="ArachnoServer" id="AS000633">
    <property type="toxin name" value="Sphingomyelinase D (LiSicTox-betaIA1ii)"/>
</dbReference>
<dbReference type="GO" id="GO:0005576">
    <property type="term" value="C:extracellular region"/>
    <property type="evidence" value="ECO:0007669"/>
    <property type="project" value="UniProtKB-SubCell"/>
</dbReference>
<dbReference type="GO" id="GO:0016829">
    <property type="term" value="F:lyase activity"/>
    <property type="evidence" value="ECO:0007669"/>
    <property type="project" value="UniProtKB-KW"/>
</dbReference>
<dbReference type="GO" id="GO:0046872">
    <property type="term" value="F:metal ion binding"/>
    <property type="evidence" value="ECO:0007669"/>
    <property type="project" value="UniProtKB-KW"/>
</dbReference>
<dbReference type="GO" id="GO:0008081">
    <property type="term" value="F:phosphoric diester hydrolase activity"/>
    <property type="evidence" value="ECO:0007669"/>
    <property type="project" value="InterPro"/>
</dbReference>
<dbReference type="GO" id="GO:0090729">
    <property type="term" value="F:toxin activity"/>
    <property type="evidence" value="ECO:0007669"/>
    <property type="project" value="UniProtKB-KW"/>
</dbReference>
<dbReference type="GO" id="GO:0031640">
    <property type="term" value="P:killing of cells of another organism"/>
    <property type="evidence" value="ECO:0007669"/>
    <property type="project" value="UniProtKB-KW"/>
</dbReference>
<dbReference type="GO" id="GO:0016042">
    <property type="term" value="P:lipid catabolic process"/>
    <property type="evidence" value="ECO:0007669"/>
    <property type="project" value="UniProtKB-KW"/>
</dbReference>
<dbReference type="CDD" id="cd08576">
    <property type="entry name" value="GDPD_like_SMaseD_PLD"/>
    <property type="match status" value="1"/>
</dbReference>
<dbReference type="Gene3D" id="3.20.20.190">
    <property type="entry name" value="Phosphatidylinositol (PI) phosphodiesterase"/>
    <property type="match status" value="1"/>
</dbReference>
<dbReference type="InterPro" id="IPR017946">
    <property type="entry name" value="PLC-like_Pdiesterase_TIM-brl"/>
</dbReference>
<dbReference type="Pfam" id="PF13653">
    <property type="entry name" value="GDPD_2"/>
    <property type="match status" value="1"/>
</dbReference>
<dbReference type="SUPFAM" id="SSF51695">
    <property type="entry name" value="PLC-like phosphodiesterases"/>
    <property type="match status" value="1"/>
</dbReference>
<proteinExistence type="evidence at transcript level"/>
<reference key="1">
    <citation type="journal article" date="2007" name="Toxicon">
        <title>The Loxtox protein family in Loxosceles intermedia (Mello-Leitao) venom.</title>
        <authorList>
            <person name="Kalapothakis E."/>
            <person name="Chatzaki M."/>
            <person name="Goncalves-Dornelas H."/>
            <person name="de Castro C.S."/>
            <person name="Silvestre F.G."/>
            <person name="Laborne F.V."/>
            <person name="de Moura J.F."/>
            <person name="Veiga S.S."/>
            <person name="Chavez-Olortegui C."/>
            <person name="Granier C."/>
            <person name="Barbaro K.C."/>
        </authorList>
    </citation>
    <scope>NUCLEOTIDE SEQUENCE [MRNA]</scope>
    <source>
        <tissue>Venom gland</tissue>
    </source>
</reference>
<reference key="2">
    <citation type="journal article" date="2006" name="Biochem. Biophys. Res. Commun.">
        <title>Structural insights into the catalytic mechanism of sphingomyelinases D and evolutionary relationship to glycerophosphodiester phosphodiesterases.</title>
        <authorList>
            <person name="Murakami M.T."/>
            <person name="Fernandes-Pedrosa M.F."/>
            <person name="de Andrade S.A."/>
            <person name="Gabdoulkhakov A."/>
            <person name="Betzel C."/>
            <person name="Tambourgi D.V."/>
            <person name="Arni R.K."/>
        </authorList>
    </citation>
    <scope>IMPORTANT SITES FOR ACTIVITY ON SPHINGOMYELIN</scope>
</reference>
<evidence type="ECO:0000250" key="1"/>
<evidence type="ECO:0000250" key="2">
    <source>
        <dbReference type="UniProtKB" id="A0A0D4WTV1"/>
    </source>
</evidence>
<evidence type="ECO:0000250" key="3">
    <source>
        <dbReference type="UniProtKB" id="A0A0D4WV12"/>
    </source>
</evidence>
<evidence type="ECO:0000250" key="4">
    <source>
        <dbReference type="UniProtKB" id="P0CE80"/>
    </source>
</evidence>
<evidence type="ECO:0000250" key="5">
    <source>
        <dbReference type="UniProtKB" id="Q4ZFU2"/>
    </source>
</evidence>
<evidence type="ECO:0000250" key="6">
    <source>
        <dbReference type="UniProtKB" id="Q8I914"/>
    </source>
</evidence>
<evidence type="ECO:0000255" key="7"/>
<evidence type="ECO:0000305" key="8"/>
<evidence type="ECO:0000305" key="9">
    <source>
    </source>
</evidence>
<evidence type="ECO:0000305" key="10">
    <source>
    </source>
</evidence>
<organism>
    <name type="scientific">Loxosceles intermedia</name>
    <name type="common">Brown spider</name>
    <dbReference type="NCBI Taxonomy" id="58218"/>
    <lineage>
        <taxon>Eukaryota</taxon>
        <taxon>Metazoa</taxon>
        <taxon>Ecdysozoa</taxon>
        <taxon>Arthropoda</taxon>
        <taxon>Chelicerata</taxon>
        <taxon>Arachnida</taxon>
        <taxon>Araneae</taxon>
        <taxon>Araneomorphae</taxon>
        <taxon>Haplogynae</taxon>
        <taxon>Scytodoidea</taxon>
        <taxon>Sicariidae</taxon>
        <taxon>Loxosceles</taxon>
    </lineage>
</organism>
<keyword id="KW-0204">Cytolysis</keyword>
<keyword id="KW-1061">Dermonecrotic toxin</keyword>
<keyword id="KW-1015">Disulfide bond</keyword>
<keyword id="KW-0354">Hemolysis</keyword>
<keyword id="KW-0442">Lipid degradation</keyword>
<keyword id="KW-0443">Lipid metabolism</keyword>
<keyword id="KW-0456">Lyase</keyword>
<keyword id="KW-0460">Magnesium</keyword>
<keyword id="KW-0479">Metal-binding</keyword>
<keyword id="KW-0964">Secreted</keyword>
<keyword id="KW-0732">Signal</keyword>
<keyword id="KW-0800">Toxin</keyword>
<keyword id="KW-0865">Zymogen</keyword>